<proteinExistence type="inferred from homology"/>
<name>CYNS_SORBI</name>
<protein>
    <recommendedName>
        <fullName evidence="1">Cyanate hydratase</fullName>
        <shortName evidence="1">Cyanase</shortName>
        <ecNumber evidence="1">4.2.1.104</ecNumber>
    </recommendedName>
    <alternativeName>
        <fullName evidence="1">Cyanate hydrolase</fullName>
    </alternativeName>
    <alternativeName>
        <fullName evidence="1">Cyanate lyase</fullName>
    </alternativeName>
</protein>
<organism>
    <name type="scientific">Sorghum bicolor</name>
    <name type="common">Sorghum</name>
    <name type="synonym">Sorghum vulgare</name>
    <dbReference type="NCBI Taxonomy" id="4558"/>
    <lineage>
        <taxon>Eukaryota</taxon>
        <taxon>Viridiplantae</taxon>
        <taxon>Streptophyta</taxon>
        <taxon>Embryophyta</taxon>
        <taxon>Tracheophyta</taxon>
        <taxon>Spermatophyta</taxon>
        <taxon>Magnoliopsida</taxon>
        <taxon>Liliopsida</taxon>
        <taxon>Poales</taxon>
        <taxon>Poaceae</taxon>
        <taxon>PACMAD clade</taxon>
        <taxon>Panicoideae</taxon>
        <taxon>Andropogonodae</taxon>
        <taxon>Andropogoneae</taxon>
        <taxon>Sorghinae</taxon>
        <taxon>Sorghum</taxon>
    </lineage>
</organism>
<sequence length="166" mass="18660">MEASGERAAVVRRLMEVKEESGKTFSEIAAETGLTNVYVAQLLRRQAHLKADTVPALRAALPTLTDELVQLMMQPPFRSYNPDIVQEPAIYRLNEAVMHFGESIKEIINEEFGDGIMSAIDFYCSVDKVQGADGKDRVVVTFDGKYLPYTEQKSEHMMSRPTRKTS</sequence>
<keyword id="KW-0456">Lyase</keyword>
<keyword id="KW-1185">Reference proteome</keyword>
<feature type="chain" id="PRO_0000403229" description="Cyanate hydratase">
    <location>
        <begin position="1"/>
        <end position="166"/>
    </location>
</feature>
<feature type="active site" evidence="1">
    <location>
        <position position="92"/>
    </location>
</feature>
<feature type="active site" evidence="1">
    <location>
        <position position="95"/>
    </location>
</feature>
<feature type="active site" evidence="1">
    <location>
        <position position="118"/>
    </location>
</feature>
<accession>C5WYI7</accession>
<gene>
    <name evidence="1" type="primary">CYN</name>
    <name type="ordered locus">Sb01g019580</name>
</gene>
<comment type="function">
    <text evidence="1">Catalyzes the reaction of cyanate with bicarbonate to produce ammonia and carbon dioxide.</text>
</comment>
<comment type="catalytic activity">
    <reaction evidence="1">
        <text>cyanate + hydrogencarbonate + 3 H(+) = NH4(+) + 2 CO2</text>
        <dbReference type="Rhea" id="RHEA:11120"/>
        <dbReference type="ChEBI" id="CHEBI:15378"/>
        <dbReference type="ChEBI" id="CHEBI:16526"/>
        <dbReference type="ChEBI" id="CHEBI:17544"/>
        <dbReference type="ChEBI" id="CHEBI:28938"/>
        <dbReference type="ChEBI" id="CHEBI:29195"/>
        <dbReference type="EC" id="4.2.1.104"/>
    </reaction>
</comment>
<comment type="similarity">
    <text evidence="1">Belongs to the cyanase family.</text>
</comment>
<reference key="1">
    <citation type="journal article" date="2009" name="Nature">
        <title>The Sorghum bicolor genome and the diversification of grasses.</title>
        <authorList>
            <person name="Paterson A.H."/>
            <person name="Bowers J.E."/>
            <person name="Bruggmann R."/>
            <person name="Dubchak I."/>
            <person name="Grimwood J."/>
            <person name="Gundlach H."/>
            <person name="Haberer G."/>
            <person name="Hellsten U."/>
            <person name="Mitros T."/>
            <person name="Poliakov A."/>
            <person name="Schmutz J."/>
            <person name="Spannagl M."/>
            <person name="Tang H."/>
            <person name="Wang X."/>
            <person name="Wicker T."/>
            <person name="Bharti A.K."/>
            <person name="Chapman J."/>
            <person name="Feltus F.A."/>
            <person name="Gowik U."/>
            <person name="Grigoriev I.V."/>
            <person name="Lyons E."/>
            <person name="Maher C.A."/>
            <person name="Martis M."/>
            <person name="Narechania A."/>
            <person name="Otillar R.P."/>
            <person name="Penning B.W."/>
            <person name="Salamov A.A."/>
            <person name="Wang Y."/>
            <person name="Zhang L."/>
            <person name="Carpita N.C."/>
            <person name="Freeling M."/>
            <person name="Gingle A.R."/>
            <person name="Hash C.T."/>
            <person name="Keller B."/>
            <person name="Klein P."/>
            <person name="Kresovich S."/>
            <person name="McCann M.C."/>
            <person name="Ming R."/>
            <person name="Peterson D.G."/>
            <person name="Mehboob-ur-Rahman M."/>
            <person name="Ware D."/>
            <person name="Westhoff P."/>
            <person name="Mayer K.F.X."/>
            <person name="Messing J."/>
            <person name="Rokhsar D.S."/>
        </authorList>
    </citation>
    <scope>NUCLEOTIDE SEQUENCE [LARGE SCALE GENOMIC DNA]</scope>
    <source>
        <strain>cv. BTx623</strain>
    </source>
</reference>
<reference key="2">
    <citation type="journal article" date="2018" name="Plant J.">
        <title>The Sorghum bicolor reference genome: improved assembly, gene annotations, a transcriptome atlas, and signatures of genome organization.</title>
        <authorList>
            <person name="McCormick R.F."/>
            <person name="Truong S.K."/>
            <person name="Sreedasyam A."/>
            <person name="Jenkins J."/>
            <person name="Shu S."/>
            <person name="Sims D."/>
            <person name="Kennedy M."/>
            <person name="Amirebrahimi M."/>
            <person name="Weers B.D."/>
            <person name="McKinley B."/>
            <person name="Mattison A."/>
            <person name="Morishige D.T."/>
            <person name="Grimwood J."/>
            <person name="Schmutz J."/>
            <person name="Mullet J.E."/>
        </authorList>
    </citation>
    <scope>GENOME REANNOTATION</scope>
    <source>
        <strain>cv. BTx623</strain>
    </source>
</reference>
<evidence type="ECO:0000255" key="1">
    <source>
        <dbReference type="HAMAP-Rule" id="MF_03139"/>
    </source>
</evidence>
<dbReference type="EC" id="4.2.1.104" evidence="1"/>
<dbReference type="EMBL" id="CM000760">
    <property type="protein sequence ID" value="EER94096.1"/>
    <property type="molecule type" value="Genomic_DNA"/>
</dbReference>
<dbReference type="RefSeq" id="XP_002467098.1">
    <property type="nucleotide sequence ID" value="XM_002467053.1"/>
</dbReference>
<dbReference type="SMR" id="C5WYI7"/>
<dbReference type="FunCoup" id="C5WYI7">
    <property type="interactions" value="927"/>
</dbReference>
<dbReference type="STRING" id="4558.C5WYI7"/>
<dbReference type="EnsemblPlants" id="EER94096">
    <property type="protein sequence ID" value="EER94096"/>
    <property type="gene ID" value="SORBI_3001G222600"/>
</dbReference>
<dbReference type="GeneID" id="8070498"/>
<dbReference type="Gramene" id="EER94096">
    <property type="protein sequence ID" value="EER94096"/>
    <property type="gene ID" value="SORBI_3001G222600"/>
</dbReference>
<dbReference type="KEGG" id="sbi:8070498"/>
<dbReference type="eggNOG" id="ENOG502RY7W">
    <property type="taxonomic scope" value="Eukaryota"/>
</dbReference>
<dbReference type="HOGENOM" id="CLU_103452_2_0_1"/>
<dbReference type="InParanoid" id="C5WYI7"/>
<dbReference type="OMA" id="AIDFKMD"/>
<dbReference type="OrthoDB" id="10019422at2759"/>
<dbReference type="Proteomes" id="UP000000768">
    <property type="component" value="Chromosome 1"/>
</dbReference>
<dbReference type="GO" id="GO:0008824">
    <property type="term" value="F:cyanate hydratase activity"/>
    <property type="evidence" value="ECO:0007669"/>
    <property type="project" value="UniProtKB-UniRule"/>
</dbReference>
<dbReference type="GO" id="GO:0003677">
    <property type="term" value="F:DNA binding"/>
    <property type="evidence" value="ECO:0007669"/>
    <property type="project" value="InterPro"/>
</dbReference>
<dbReference type="GO" id="GO:0042802">
    <property type="term" value="F:identical protein binding"/>
    <property type="evidence" value="ECO:0007669"/>
    <property type="project" value="EnsemblPlants"/>
</dbReference>
<dbReference type="GO" id="GO:0009440">
    <property type="term" value="P:cyanate catabolic process"/>
    <property type="evidence" value="ECO:0007669"/>
    <property type="project" value="EnsemblPlants"/>
</dbReference>
<dbReference type="GO" id="GO:0009651">
    <property type="term" value="P:response to salt stress"/>
    <property type="evidence" value="ECO:0007669"/>
    <property type="project" value="EnsemblPlants"/>
</dbReference>
<dbReference type="CDD" id="cd00559">
    <property type="entry name" value="Cyanase_C"/>
    <property type="match status" value="1"/>
</dbReference>
<dbReference type="CDD" id="cd00093">
    <property type="entry name" value="HTH_XRE"/>
    <property type="match status" value="1"/>
</dbReference>
<dbReference type="FunFam" id="3.30.1160.10:FF:000002">
    <property type="entry name" value="Cyanate hydratase"/>
    <property type="match status" value="1"/>
</dbReference>
<dbReference type="Gene3D" id="3.30.1160.10">
    <property type="entry name" value="Cyanate lyase, C-terminal domain"/>
    <property type="match status" value="1"/>
</dbReference>
<dbReference type="Gene3D" id="1.10.260.40">
    <property type="entry name" value="lambda repressor-like DNA-binding domains"/>
    <property type="match status" value="1"/>
</dbReference>
<dbReference type="HAMAP" id="MF_00535">
    <property type="entry name" value="Cyanate_hydrat"/>
    <property type="match status" value="1"/>
</dbReference>
<dbReference type="InterPro" id="IPR001387">
    <property type="entry name" value="Cro/C1-type_HTH"/>
</dbReference>
<dbReference type="InterPro" id="IPR008076">
    <property type="entry name" value="Cyanase"/>
</dbReference>
<dbReference type="InterPro" id="IPR003712">
    <property type="entry name" value="Cyanate_lyase_C"/>
</dbReference>
<dbReference type="InterPro" id="IPR036581">
    <property type="entry name" value="Cyanate_lyase_C_sf"/>
</dbReference>
<dbReference type="InterPro" id="IPR010982">
    <property type="entry name" value="Lambda_DNA-bd_dom_sf"/>
</dbReference>
<dbReference type="NCBIfam" id="TIGR00673">
    <property type="entry name" value="cynS"/>
    <property type="match status" value="1"/>
</dbReference>
<dbReference type="PANTHER" id="PTHR34186">
    <property type="entry name" value="CYANATE HYDRATASE"/>
    <property type="match status" value="1"/>
</dbReference>
<dbReference type="PANTHER" id="PTHR34186:SF2">
    <property type="entry name" value="CYANATE HYDRATASE"/>
    <property type="match status" value="1"/>
</dbReference>
<dbReference type="Pfam" id="PF02560">
    <property type="entry name" value="Cyanate_lyase"/>
    <property type="match status" value="1"/>
</dbReference>
<dbReference type="PIRSF" id="PIRSF001263">
    <property type="entry name" value="Cyanate_hydratas"/>
    <property type="match status" value="1"/>
</dbReference>
<dbReference type="PRINTS" id="PR01693">
    <property type="entry name" value="CYANASE"/>
</dbReference>
<dbReference type="SMART" id="SM01116">
    <property type="entry name" value="Cyanate_lyase"/>
    <property type="match status" value="1"/>
</dbReference>
<dbReference type="SUPFAM" id="SSF55234">
    <property type="entry name" value="Cyanase C-terminal domain"/>
    <property type="match status" value="1"/>
</dbReference>
<dbReference type="SUPFAM" id="SSF47413">
    <property type="entry name" value="lambda repressor-like DNA-binding domains"/>
    <property type="match status" value="1"/>
</dbReference>